<proteinExistence type="evidence at protein level"/>
<accession>A4FU69</accession>
<accession>B2RPN0</accession>
<accession>B4DS75</accession>
<accession>B4DZR5</accession>
<accession>F5GYL2</accession>
<accession>Q0VD68</accession>
<accession>Q6ZRM6</accession>
<accession>Q8NDG9</accession>
<evidence type="ECO:0000255" key="1">
    <source>
        <dbReference type="PROSITE-ProRule" id="PRU00448"/>
    </source>
</evidence>
<evidence type="ECO:0000256" key="2">
    <source>
        <dbReference type="SAM" id="MobiDB-lite"/>
    </source>
</evidence>
<evidence type="ECO:0000269" key="3">
    <source>
    </source>
</evidence>
<evidence type="ECO:0000269" key="4">
    <source>
    </source>
</evidence>
<evidence type="ECO:0000269" key="5">
    <source>
    </source>
</evidence>
<evidence type="ECO:0000303" key="6">
    <source>
    </source>
</evidence>
<evidence type="ECO:0000303" key="7">
    <source>
    </source>
</evidence>
<evidence type="ECO:0000303" key="8">
    <source>
    </source>
</evidence>
<evidence type="ECO:0000305" key="9"/>
<evidence type="ECO:0007744" key="10">
    <source>
    </source>
</evidence>
<protein>
    <recommendedName>
        <fullName>EF-hand calcium-binding domain-containing protein 5</fullName>
    </recommendedName>
</protein>
<gene>
    <name type="primary">EFCAB5</name>
</gene>
<reference key="1">
    <citation type="journal article" date="2004" name="Nat. Genet.">
        <title>Complete sequencing and characterization of 21,243 full-length human cDNAs.</title>
        <authorList>
            <person name="Ota T."/>
            <person name="Suzuki Y."/>
            <person name="Nishikawa T."/>
            <person name="Otsuki T."/>
            <person name="Sugiyama T."/>
            <person name="Irie R."/>
            <person name="Wakamatsu A."/>
            <person name="Hayashi K."/>
            <person name="Sato H."/>
            <person name="Nagai K."/>
            <person name="Kimura K."/>
            <person name="Makita H."/>
            <person name="Sekine M."/>
            <person name="Obayashi M."/>
            <person name="Nishi T."/>
            <person name="Shibahara T."/>
            <person name="Tanaka T."/>
            <person name="Ishii S."/>
            <person name="Yamamoto J."/>
            <person name="Saito K."/>
            <person name="Kawai Y."/>
            <person name="Isono Y."/>
            <person name="Nakamura Y."/>
            <person name="Nagahari K."/>
            <person name="Murakami K."/>
            <person name="Yasuda T."/>
            <person name="Iwayanagi T."/>
            <person name="Wagatsuma M."/>
            <person name="Shiratori A."/>
            <person name="Sudo H."/>
            <person name="Hosoiri T."/>
            <person name="Kaku Y."/>
            <person name="Kodaira H."/>
            <person name="Kondo H."/>
            <person name="Sugawara M."/>
            <person name="Takahashi M."/>
            <person name="Kanda K."/>
            <person name="Yokoi T."/>
            <person name="Furuya T."/>
            <person name="Kikkawa E."/>
            <person name="Omura Y."/>
            <person name="Abe K."/>
            <person name="Kamihara K."/>
            <person name="Katsuta N."/>
            <person name="Sato K."/>
            <person name="Tanikawa M."/>
            <person name="Yamazaki M."/>
            <person name="Ninomiya K."/>
            <person name="Ishibashi T."/>
            <person name="Yamashita H."/>
            <person name="Murakawa K."/>
            <person name="Fujimori K."/>
            <person name="Tanai H."/>
            <person name="Kimata M."/>
            <person name="Watanabe M."/>
            <person name="Hiraoka S."/>
            <person name="Chiba Y."/>
            <person name="Ishida S."/>
            <person name="Ono Y."/>
            <person name="Takiguchi S."/>
            <person name="Watanabe S."/>
            <person name="Yosida M."/>
            <person name="Hotuta T."/>
            <person name="Kusano J."/>
            <person name="Kanehori K."/>
            <person name="Takahashi-Fujii A."/>
            <person name="Hara H."/>
            <person name="Tanase T.-O."/>
            <person name="Nomura Y."/>
            <person name="Togiya S."/>
            <person name="Komai F."/>
            <person name="Hara R."/>
            <person name="Takeuchi K."/>
            <person name="Arita M."/>
            <person name="Imose N."/>
            <person name="Musashino K."/>
            <person name="Yuuki H."/>
            <person name="Oshima A."/>
            <person name="Sasaki N."/>
            <person name="Aotsuka S."/>
            <person name="Yoshikawa Y."/>
            <person name="Matsunawa H."/>
            <person name="Ichihara T."/>
            <person name="Shiohata N."/>
            <person name="Sano S."/>
            <person name="Moriya S."/>
            <person name="Momiyama H."/>
            <person name="Satoh N."/>
            <person name="Takami S."/>
            <person name="Terashima Y."/>
            <person name="Suzuki O."/>
            <person name="Nakagawa S."/>
            <person name="Senoh A."/>
            <person name="Mizoguchi H."/>
            <person name="Goto Y."/>
            <person name="Shimizu F."/>
            <person name="Wakebe H."/>
            <person name="Hishigaki H."/>
            <person name="Watanabe T."/>
            <person name="Sugiyama A."/>
            <person name="Takemoto M."/>
            <person name="Kawakami B."/>
            <person name="Yamazaki M."/>
            <person name="Watanabe K."/>
            <person name="Kumagai A."/>
            <person name="Itakura S."/>
            <person name="Fukuzumi Y."/>
            <person name="Fujimori Y."/>
            <person name="Komiyama M."/>
            <person name="Tashiro H."/>
            <person name="Tanigami A."/>
            <person name="Fujiwara T."/>
            <person name="Ono T."/>
            <person name="Yamada K."/>
            <person name="Fujii Y."/>
            <person name="Ozaki K."/>
            <person name="Hirao M."/>
            <person name="Ohmori Y."/>
            <person name="Kawabata A."/>
            <person name="Hikiji T."/>
            <person name="Kobatake N."/>
            <person name="Inagaki H."/>
            <person name="Ikema Y."/>
            <person name="Okamoto S."/>
            <person name="Okitani R."/>
            <person name="Kawakami T."/>
            <person name="Noguchi S."/>
            <person name="Itoh T."/>
            <person name="Shigeta K."/>
            <person name="Senba T."/>
            <person name="Matsumura K."/>
            <person name="Nakajima Y."/>
            <person name="Mizuno T."/>
            <person name="Morinaga M."/>
            <person name="Sasaki M."/>
            <person name="Togashi T."/>
            <person name="Oyama M."/>
            <person name="Hata H."/>
            <person name="Watanabe M."/>
            <person name="Komatsu T."/>
            <person name="Mizushima-Sugano J."/>
            <person name="Satoh T."/>
            <person name="Shirai Y."/>
            <person name="Takahashi Y."/>
            <person name="Nakagawa K."/>
            <person name="Okumura K."/>
            <person name="Nagase T."/>
            <person name="Nomura N."/>
            <person name="Kikuchi H."/>
            <person name="Masuho Y."/>
            <person name="Yamashita R."/>
            <person name="Nakai K."/>
            <person name="Yada T."/>
            <person name="Nakamura Y."/>
            <person name="Ohara O."/>
            <person name="Isogai T."/>
            <person name="Sugano S."/>
        </authorList>
    </citation>
    <scope>NUCLEOTIDE SEQUENCE [LARGE SCALE MRNA] (ISOFORMS 5 AND 6)</scope>
    <scope>NUCLEOTIDE SEQUENCE [LARGE SCALE MRNA] OF 195-1503 (ISOFORM 3)</scope>
    <scope>VARIANTS VAL-237 AND LYS-278</scope>
    <source>
        <tissue>Brain</tissue>
        <tissue>Testis</tissue>
    </source>
</reference>
<reference key="2">
    <citation type="journal article" date="2007" name="BMC Genomics">
        <title>The full-ORF clone resource of the German cDNA consortium.</title>
        <authorList>
            <person name="Bechtel S."/>
            <person name="Rosenfelder H."/>
            <person name="Duda A."/>
            <person name="Schmidt C.P."/>
            <person name="Ernst U."/>
            <person name="Wellenreuther R."/>
            <person name="Mehrle A."/>
            <person name="Schuster C."/>
            <person name="Bahr A."/>
            <person name="Bloecker H."/>
            <person name="Heubner D."/>
            <person name="Hoerlein A."/>
            <person name="Michel G."/>
            <person name="Wedler H."/>
            <person name="Koehrer K."/>
            <person name="Ottenwaelder B."/>
            <person name="Poustka A."/>
            <person name="Wiemann S."/>
            <person name="Schupp I."/>
        </authorList>
    </citation>
    <scope>NUCLEOTIDE SEQUENCE [LARGE SCALE MRNA] (ISOFORM 2)</scope>
    <scope>VARIANT LYS-278</scope>
</reference>
<reference key="3">
    <citation type="journal article" date="2006" name="Nature">
        <title>DNA sequence of human chromosome 17 and analysis of rearrangement in the human lineage.</title>
        <authorList>
            <person name="Zody M.C."/>
            <person name="Garber M."/>
            <person name="Adams D.J."/>
            <person name="Sharpe T."/>
            <person name="Harrow J."/>
            <person name="Lupski J.R."/>
            <person name="Nicholson C."/>
            <person name="Searle S.M."/>
            <person name="Wilming L."/>
            <person name="Young S.K."/>
            <person name="Abouelleil A."/>
            <person name="Allen N.R."/>
            <person name="Bi W."/>
            <person name="Bloom T."/>
            <person name="Borowsky M.L."/>
            <person name="Bugalter B.E."/>
            <person name="Butler J."/>
            <person name="Chang J.L."/>
            <person name="Chen C.-K."/>
            <person name="Cook A."/>
            <person name="Corum B."/>
            <person name="Cuomo C.A."/>
            <person name="de Jong P.J."/>
            <person name="DeCaprio D."/>
            <person name="Dewar K."/>
            <person name="FitzGerald M."/>
            <person name="Gilbert J."/>
            <person name="Gibson R."/>
            <person name="Gnerre S."/>
            <person name="Goldstein S."/>
            <person name="Grafham D.V."/>
            <person name="Grocock R."/>
            <person name="Hafez N."/>
            <person name="Hagopian D.S."/>
            <person name="Hart E."/>
            <person name="Norman C.H."/>
            <person name="Humphray S."/>
            <person name="Jaffe D.B."/>
            <person name="Jones M."/>
            <person name="Kamal M."/>
            <person name="Khodiyar V.K."/>
            <person name="LaButti K."/>
            <person name="Laird G."/>
            <person name="Lehoczky J."/>
            <person name="Liu X."/>
            <person name="Lokyitsang T."/>
            <person name="Loveland J."/>
            <person name="Lui A."/>
            <person name="Macdonald P."/>
            <person name="Major J.E."/>
            <person name="Matthews L."/>
            <person name="Mauceli E."/>
            <person name="McCarroll S.A."/>
            <person name="Mihalev A.H."/>
            <person name="Mudge J."/>
            <person name="Nguyen C."/>
            <person name="Nicol R."/>
            <person name="O'Leary S.B."/>
            <person name="Osoegawa K."/>
            <person name="Schwartz D.C."/>
            <person name="Shaw-Smith C."/>
            <person name="Stankiewicz P."/>
            <person name="Steward C."/>
            <person name="Swarbreck D."/>
            <person name="Venkataraman V."/>
            <person name="Whittaker C.A."/>
            <person name="Yang X."/>
            <person name="Zimmer A.R."/>
            <person name="Bradley A."/>
            <person name="Hubbard T."/>
            <person name="Birren B.W."/>
            <person name="Rogers J."/>
            <person name="Lander E.S."/>
            <person name="Nusbaum C."/>
        </authorList>
    </citation>
    <scope>NUCLEOTIDE SEQUENCE [LARGE SCALE GENOMIC DNA]</scope>
</reference>
<reference key="4">
    <citation type="journal article" date="2004" name="Genome Res.">
        <title>The status, quality, and expansion of the NIH full-length cDNA project: the Mammalian Gene Collection (MGC).</title>
        <authorList>
            <consortium name="The MGC Project Team"/>
        </authorList>
    </citation>
    <scope>NUCLEOTIDE SEQUENCE [LARGE SCALE MRNA] (ISOFORM 1)</scope>
    <scope>NUCLEOTIDE SEQUENCE [LARGE SCALE MRNA] OF 203-1503 (ISOFORM 4)</scope>
    <scope>VARIANT LYS-278</scope>
</reference>
<reference key="5">
    <citation type="journal article" date="2008" name="Proc. Natl. Acad. Sci. U.S.A.">
        <title>A quantitative atlas of mitotic phosphorylation.</title>
        <authorList>
            <person name="Dephoure N."/>
            <person name="Zhou C."/>
            <person name="Villen J."/>
            <person name="Beausoleil S.A."/>
            <person name="Bakalarski C.E."/>
            <person name="Elledge S.J."/>
            <person name="Gygi S.P."/>
        </authorList>
    </citation>
    <scope>PHOSPHORYLATION [LARGE SCALE ANALYSIS] AT SER-77</scope>
    <scope>IDENTIFICATION BY MASS SPECTROMETRY [LARGE SCALE ANALYSIS]</scope>
    <source>
        <tissue>Cervix carcinoma</tissue>
    </source>
</reference>
<feature type="chain" id="PRO_0000315836" description="EF-hand calcium-binding domain-containing protein 5">
    <location>
        <begin position="1"/>
        <end position="1503"/>
    </location>
</feature>
<feature type="domain" description="EF-hand" evidence="1">
    <location>
        <begin position="869"/>
        <end position="904"/>
    </location>
</feature>
<feature type="region of interest" description="Disordered" evidence="2">
    <location>
        <begin position="1"/>
        <end position="23"/>
    </location>
</feature>
<feature type="region of interest" description="Disordered" evidence="2">
    <location>
        <begin position="477"/>
        <end position="518"/>
    </location>
</feature>
<feature type="region of interest" description="Disordered" evidence="2">
    <location>
        <begin position="544"/>
        <end position="656"/>
    </location>
</feature>
<feature type="region of interest" description="Disordered" evidence="2">
    <location>
        <begin position="730"/>
        <end position="750"/>
    </location>
</feature>
<feature type="compositionally biased region" description="Basic and acidic residues" evidence="2">
    <location>
        <begin position="8"/>
        <end position="23"/>
    </location>
</feature>
<feature type="compositionally biased region" description="Polar residues" evidence="2">
    <location>
        <begin position="549"/>
        <end position="561"/>
    </location>
</feature>
<feature type="compositionally biased region" description="Basic and acidic residues" evidence="2">
    <location>
        <begin position="562"/>
        <end position="582"/>
    </location>
</feature>
<feature type="compositionally biased region" description="Basic and acidic residues" evidence="2">
    <location>
        <begin position="607"/>
        <end position="622"/>
    </location>
</feature>
<feature type="binding site" evidence="1">
    <location>
        <position position="882"/>
    </location>
    <ligand>
        <name>Ca(2+)</name>
        <dbReference type="ChEBI" id="CHEBI:29108"/>
    </ligand>
</feature>
<feature type="binding site" evidence="1">
    <location>
        <position position="884"/>
    </location>
    <ligand>
        <name>Ca(2+)</name>
        <dbReference type="ChEBI" id="CHEBI:29108"/>
    </ligand>
</feature>
<feature type="binding site" evidence="1">
    <location>
        <position position="886"/>
    </location>
    <ligand>
        <name>Ca(2+)</name>
        <dbReference type="ChEBI" id="CHEBI:29108"/>
    </ligand>
</feature>
<feature type="binding site" evidence="1">
    <location>
        <position position="893"/>
    </location>
    <ligand>
        <name>Ca(2+)</name>
        <dbReference type="ChEBI" id="CHEBI:29108"/>
    </ligand>
</feature>
<feature type="modified residue" description="Phosphoserine" evidence="10">
    <location>
        <position position="77"/>
    </location>
</feature>
<feature type="splice variant" id="VSP_055510" description="In isoform 6." evidence="6">
    <location>
        <begin position="1"/>
        <end position="343"/>
    </location>
</feature>
<feature type="splice variant" id="VSP_047184" description="In isoform 5." evidence="6">
    <location>
        <begin position="1"/>
        <end position="56"/>
    </location>
</feature>
<feature type="splice variant" id="VSP_030732" description="In isoform 3." evidence="6">
    <location>
        <begin position="789"/>
        <end position="912"/>
    </location>
</feature>
<feature type="splice variant" id="VSP_047185" description="In isoform 5 and isoform 6." evidence="6">
    <original>FSQNAFQVRQRLLLEAIFQKWDSDGSGFLDLKEVDELLYTYKEGMEKESMKK</original>
    <variation>VSLCRQAGVQWRNCSSLQPPTPGLKRSSHHRLLSNWDYRERRKFFPLETKFP</variation>
    <location>
        <begin position="861"/>
        <end position="912"/>
    </location>
</feature>
<feature type="splice variant" id="VSP_047186" description="In isoform 5 and isoform 6." evidence="6">
    <location>
        <begin position="913"/>
        <end position="1503"/>
    </location>
</feature>
<feature type="splice variant" id="VSP_030733" description="In isoform 4." evidence="7">
    <location>
        <begin position="913"/>
        <end position="1440"/>
    </location>
</feature>
<feature type="splice variant" id="VSP_030734" description="In isoform 2." evidence="8">
    <original>AKLHIQFPKPHPGH</original>
    <variation>GLTLSPGWSAVAQL</variation>
    <location>
        <begin position="913"/>
        <end position="926"/>
    </location>
</feature>
<feature type="splice variant" id="VSP_030735" description="In isoform 2." evidence="8">
    <location>
        <begin position="927"/>
        <end position="1503"/>
    </location>
</feature>
<feature type="sequence variant" id="VAR_038343" description="In dbSNP:rs9897794." evidence="3">
    <original>L</original>
    <variation>V</variation>
    <location>
        <position position="237"/>
    </location>
</feature>
<feature type="sequence variant" id="VAR_038344" description="In dbSNP:rs4795524." evidence="3 4 5">
    <original>I</original>
    <variation>K</variation>
    <location>
        <position position="278"/>
    </location>
</feature>
<feature type="sequence variant" id="VAR_038345" description="In dbSNP:rs9900546.">
    <original>R</original>
    <variation>S</variation>
    <location>
        <position position="561"/>
    </location>
</feature>
<feature type="sequence variant" id="VAR_048644" description="In dbSNP:rs9894896.">
    <original>A</original>
    <variation>D</variation>
    <location>
        <position position="1145"/>
    </location>
</feature>
<feature type="sequence variant" id="VAR_048645" description="In dbSNP:rs4499292.">
    <original>V</original>
    <variation>A</variation>
    <location>
        <position position="1252"/>
    </location>
</feature>
<feature type="sequence variant" id="VAR_048646" description="In dbSNP:rs35724168.">
    <original>R</original>
    <variation>T</variation>
    <location>
        <position position="1274"/>
    </location>
</feature>
<feature type="sequence conflict" description="In Ref. 1; BX648689." evidence="9" ref="1">
    <original>L</original>
    <variation>P</variation>
    <location>
        <position position="324"/>
    </location>
</feature>
<feature type="sequence conflict" description="In Ref. 1; BX648689." evidence="9" ref="1">
    <original>D</original>
    <variation>E</variation>
    <location>
        <position position="374"/>
    </location>
</feature>
<feature type="sequence conflict" description="In Ref. 4; BAC87284." evidence="9" ref="4">
    <original>R</original>
    <variation>Q</variation>
    <location>
        <position position="429"/>
    </location>
</feature>
<feature type="sequence conflict" description="In Ref. 4; BAC87284." evidence="9" ref="4">
    <original>M</original>
    <variation>I</variation>
    <location>
        <position position="962"/>
    </location>
</feature>
<feature type="sequence conflict" description="In Ref. 1; CAD38767." evidence="9" ref="1">
    <original>V</original>
    <variation>G</variation>
    <location>
        <position position="1386"/>
    </location>
</feature>
<dbReference type="EMBL" id="AK128126">
    <property type="protein sequence ID" value="BAC87284.1"/>
    <property type="status" value="ALT_INIT"/>
    <property type="molecule type" value="mRNA"/>
</dbReference>
<dbReference type="EMBL" id="AK299608">
    <property type="protein sequence ID" value="BAG61537.1"/>
    <property type="molecule type" value="mRNA"/>
</dbReference>
<dbReference type="EMBL" id="AK303060">
    <property type="protein sequence ID" value="BAG64177.1"/>
    <property type="molecule type" value="mRNA"/>
</dbReference>
<dbReference type="EMBL" id="BX648689">
    <property type="status" value="NOT_ANNOTATED_CDS"/>
    <property type="molecule type" value="mRNA"/>
</dbReference>
<dbReference type="EMBL" id="AL833911">
    <property type="protein sequence ID" value="CAD38767.1"/>
    <property type="molecule type" value="mRNA"/>
</dbReference>
<dbReference type="EMBL" id="AC104982">
    <property type="status" value="NOT_ANNOTATED_CDS"/>
    <property type="molecule type" value="Genomic_DNA"/>
</dbReference>
<dbReference type="EMBL" id="AC104984">
    <property type="status" value="NOT_ANNOTATED_CDS"/>
    <property type="molecule type" value="Genomic_DNA"/>
</dbReference>
<dbReference type="EMBL" id="AC104996">
    <property type="status" value="NOT_ANNOTATED_CDS"/>
    <property type="molecule type" value="Genomic_DNA"/>
</dbReference>
<dbReference type="EMBL" id="BC110608">
    <property type="protein sequence ID" value="AAI10609.1"/>
    <property type="molecule type" value="mRNA"/>
</dbReference>
<dbReference type="EMBL" id="BC110609">
    <property type="protein sequence ID" value="AAI10610.1"/>
    <property type="molecule type" value="mRNA"/>
</dbReference>
<dbReference type="EMBL" id="BC119807">
    <property type="protein sequence ID" value="AAI19808.1"/>
    <property type="molecule type" value="mRNA"/>
</dbReference>
<dbReference type="EMBL" id="BC137519">
    <property type="protein sequence ID" value="AAI37520.1"/>
    <property type="molecule type" value="mRNA"/>
</dbReference>
<dbReference type="CCDS" id="CCDS11254.2">
    <molecule id="A4FU69-1"/>
</dbReference>
<dbReference type="CCDS" id="CCDS54103.1">
    <molecule id="A4FU69-5"/>
</dbReference>
<dbReference type="RefSeq" id="NP_001138525.2">
    <molecule id="A4FU69-5"/>
    <property type="nucleotide sequence ID" value="NM_001145053.2"/>
</dbReference>
<dbReference type="RefSeq" id="NP_940931.3">
    <molecule id="A4FU69-1"/>
    <property type="nucleotide sequence ID" value="NM_198529.4"/>
</dbReference>
<dbReference type="BioGRID" id="131921">
    <property type="interactions" value="11"/>
</dbReference>
<dbReference type="FunCoup" id="A4FU69">
    <property type="interactions" value="126"/>
</dbReference>
<dbReference type="IntAct" id="A4FU69">
    <property type="interactions" value="3"/>
</dbReference>
<dbReference type="MINT" id="A4FU69"/>
<dbReference type="STRING" id="9606.ENSP00000378312"/>
<dbReference type="GlyGen" id="A4FU69">
    <property type="glycosylation" value="1 site, 1 O-linked glycan (1 site)"/>
</dbReference>
<dbReference type="iPTMnet" id="A4FU69"/>
<dbReference type="PhosphoSitePlus" id="A4FU69"/>
<dbReference type="SwissPalm" id="A4FU69"/>
<dbReference type="BioMuta" id="EFCAB5"/>
<dbReference type="jPOST" id="A4FU69"/>
<dbReference type="MassIVE" id="A4FU69"/>
<dbReference type="PaxDb" id="9606-ENSP00000378312"/>
<dbReference type="PeptideAtlas" id="A4FU69"/>
<dbReference type="ProteomicsDB" id="24772"/>
<dbReference type="ProteomicsDB" id="5619"/>
<dbReference type="ProteomicsDB" id="669">
    <molecule id="A4FU69-1"/>
</dbReference>
<dbReference type="ProteomicsDB" id="670">
    <molecule id="A4FU69-2"/>
</dbReference>
<dbReference type="ProteomicsDB" id="671">
    <molecule id="A4FU69-3"/>
</dbReference>
<dbReference type="ProteomicsDB" id="672">
    <molecule id="A4FU69-4"/>
</dbReference>
<dbReference type="Antibodypedia" id="15071">
    <property type="antibodies" value="31 antibodies from 13 providers"/>
</dbReference>
<dbReference type="DNASU" id="374786"/>
<dbReference type="Ensembl" id="ENST00000394835.8">
    <molecule id="A4FU69-1"/>
    <property type="protein sequence ID" value="ENSP00000378312.3"/>
    <property type="gene ID" value="ENSG00000176927.16"/>
</dbReference>
<dbReference type="Ensembl" id="ENST00000440741.7">
    <molecule id="A4FU69-2"/>
    <property type="protein sequence ID" value="ENSP00000393095.2"/>
    <property type="gene ID" value="ENSG00000176927.16"/>
</dbReference>
<dbReference type="Ensembl" id="ENST00000536908.6">
    <molecule id="A4FU69-5"/>
    <property type="protein sequence ID" value="ENSP00000440619.2"/>
    <property type="gene ID" value="ENSG00000176927.16"/>
</dbReference>
<dbReference type="GeneID" id="374786"/>
<dbReference type="KEGG" id="hsa:374786"/>
<dbReference type="MANE-Select" id="ENST00000394835.8">
    <property type="protein sequence ID" value="ENSP00000378312.3"/>
    <property type="RefSeq nucleotide sequence ID" value="NM_198529.4"/>
    <property type="RefSeq protein sequence ID" value="NP_940931.3"/>
</dbReference>
<dbReference type="UCSC" id="uc002het.3">
    <molecule id="A4FU69-1"/>
    <property type="organism name" value="human"/>
</dbReference>
<dbReference type="AGR" id="HGNC:24801"/>
<dbReference type="CTD" id="374786"/>
<dbReference type="DisGeNET" id="374786"/>
<dbReference type="GeneCards" id="EFCAB5"/>
<dbReference type="HGNC" id="HGNC:24801">
    <property type="gene designation" value="EFCAB5"/>
</dbReference>
<dbReference type="HPA" id="ENSG00000176927">
    <property type="expression patterns" value="Tissue enriched (testis)"/>
</dbReference>
<dbReference type="MalaCards" id="EFCAB5"/>
<dbReference type="neXtProt" id="NX_A4FU69"/>
<dbReference type="OpenTargets" id="ENSG00000176927"/>
<dbReference type="PharmGKB" id="PA145008457"/>
<dbReference type="VEuPathDB" id="HostDB:ENSG00000176927"/>
<dbReference type="eggNOG" id="ENOG502R5M0">
    <property type="taxonomic scope" value="Eukaryota"/>
</dbReference>
<dbReference type="GeneTree" id="ENSGT00940000154049"/>
<dbReference type="HOGENOM" id="CLU_006376_0_0_1"/>
<dbReference type="InParanoid" id="A4FU69"/>
<dbReference type="OMA" id="KNDYNGS"/>
<dbReference type="OrthoDB" id="199400at2759"/>
<dbReference type="PAN-GO" id="A4FU69">
    <property type="GO annotations" value="0 GO annotations based on evolutionary models"/>
</dbReference>
<dbReference type="PhylomeDB" id="A4FU69"/>
<dbReference type="TreeFam" id="TF329659"/>
<dbReference type="PathwayCommons" id="A4FU69"/>
<dbReference type="SignaLink" id="A4FU69"/>
<dbReference type="BioGRID-ORCS" id="374786">
    <property type="hits" value="12 hits in 1149 CRISPR screens"/>
</dbReference>
<dbReference type="ChiTaRS" id="EFCAB5">
    <property type="organism name" value="human"/>
</dbReference>
<dbReference type="GenomeRNAi" id="374786"/>
<dbReference type="Pharos" id="A4FU69">
    <property type="development level" value="Tdark"/>
</dbReference>
<dbReference type="PRO" id="PR:A4FU69"/>
<dbReference type="Proteomes" id="UP000005640">
    <property type="component" value="Chromosome 17"/>
</dbReference>
<dbReference type="RNAct" id="A4FU69">
    <property type="molecule type" value="protein"/>
</dbReference>
<dbReference type="Bgee" id="ENSG00000176927">
    <property type="expression patterns" value="Expressed in left testis and 97 other cell types or tissues"/>
</dbReference>
<dbReference type="ExpressionAtlas" id="A4FU69">
    <property type="expression patterns" value="baseline and differential"/>
</dbReference>
<dbReference type="GO" id="GO:0005509">
    <property type="term" value="F:calcium ion binding"/>
    <property type="evidence" value="ECO:0007669"/>
    <property type="project" value="InterPro"/>
</dbReference>
<dbReference type="CDD" id="cd22968">
    <property type="entry name" value="DD_EFCAB5"/>
    <property type="match status" value="1"/>
</dbReference>
<dbReference type="Gene3D" id="3.30.450.40">
    <property type="match status" value="1"/>
</dbReference>
<dbReference type="Gene3D" id="1.10.238.10">
    <property type="entry name" value="EF-hand"/>
    <property type="match status" value="1"/>
</dbReference>
<dbReference type="InterPro" id="IPR018247">
    <property type="entry name" value="EF_Hand_1_Ca_BS"/>
</dbReference>
<dbReference type="InterPro" id="IPR002048">
    <property type="entry name" value="EF_hand_dom"/>
</dbReference>
<dbReference type="InterPro" id="IPR029016">
    <property type="entry name" value="GAF-like_dom_sf"/>
</dbReference>
<dbReference type="PANTHER" id="PTHR46788">
    <property type="entry name" value="EF-HAND CALCIUM-BINDING DOMAIN-CONTAINING PROTEIN 5"/>
    <property type="match status" value="1"/>
</dbReference>
<dbReference type="PANTHER" id="PTHR46788:SF1">
    <property type="entry name" value="EF-HAND CALCIUM-BINDING DOMAIN-CONTAINING PROTEIN 5"/>
    <property type="match status" value="1"/>
</dbReference>
<dbReference type="SUPFAM" id="SSF55781">
    <property type="entry name" value="GAF domain-like"/>
    <property type="match status" value="1"/>
</dbReference>
<dbReference type="PROSITE" id="PS00018">
    <property type="entry name" value="EF_HAND_1"/>
    <property type="match status" value="1"/>
</dbReference>
<dbReference type="PROSITE" id="PS50222">
    <property type="entry name" value="EF_HAND_2"/>
    <property type="match status" value="1"/>
</dbReference>
<organism>
    <name type="scientific">Homo sapiens</name>
    <name type="common">Human</name>
    <dbReference type="NCBI Taxonomy" id="9606"/>
    <lineage>
        <taxon>Eukaryota</taxon>
        <taxon>Metazoa</taxon>
        <taxon>Chordata</taxon>
        <taxon>Craniata</taxon>
        <taxon>Vertebrata</taxon>
        <taxon>Euteleostomi</taxon>
        <taxon>Mammalia</taxon>
        <taxon>Eutheria</taxon>
        <taxon>Euarchontoglires</taxon>
        <taxon>Primates</taxon>
        <taxon>Haplorrhini</taxon>
        <taxon>Catarrhini</taxon>
        <taxon>Hominidae</taxon>
        <taxon>Homo</taxon>
    </lineage>
</organism>
<sequence>MNESASQEELRPAQENRKEDKERKWNLTEVKELHETLQSVPDVPVKEDTNSVVEKAMDEIKSQELNLEGQRKISPGSIKDSKTEASGNIAIRKSAKVIFALDETELKSKPEHTWKKNLFERMEARAQAMQQKIIDKENLKKELEKKAEKKLPRDNLAKEWFNTDSMTLNNTAYLLDKLLPTLVPGVENMLTQVEKKKVLTEADTPSKFDPINYLGEYLIRNNPNYIKDPGMSGYQRLMKEVTEDLKIYVPDTICNRVSKMKENVKQNRKQRESIDKIIVKVANTRKQALQEQFDEWILDPKGMIPKSVIQNVLQEFFQNPDFKLGSHCKQLDITDSTEPRLNKMEFTEYISSHIKDLKSEMFEELLKHLCHSADEFREVIKADMRRQMFAELFLHCDHGKVGFLDRQRTLALLELFYDHSSQMLRSLLRNPRQWPFIEFEEINLTELWGDMDNQKHIYEGFDKVLLEMNTLLSANHASKTQSKLLESPDQPKLNEQRTSTPSPNPPEQQRGVTAEQGPQRISIEEQQQGKKPTAEQELYIESVIEPGTHTESTLEQGSSRRLLTEQETHRESTTEQGQHKGSIEGQGPRRVSVSEQGSSRESVAEQGSRRESIAEQDRHKGSVAEQGSRRMSAAEQGSLRESVIEEPYQKSEQGPYGEIISEEQEDIGSTSQSRKDSILKSTKYGEPITSEYIEVPLQEKRSWEQTYEEEIFLSSELQEEVPTLSRKDHFPETTKKEVQKDKPCEPKSQKIEGKSWSGEFFTCNWKMKYVTFEDEEQANLIYGNSRFTDLHSIIRNIQSCKEVKGRTAFNGVSFNLLQFVQLLETFVGEDAPLSVSETLTSFFKEGYVETEQEKMNALEQFSQNAFQVRQRLLLEAIFQKWDSDGSGFLDLKEVDELLYTYKEGMEKESMKKAKLHIQFPKPHPGHEVRLSSKQFQNYIELVVSELRGNEDQVLESVVEFLMNALERSHIESLRNSARRKWLHQIQCAAETSGVSLEPVYSETFKALMQDAEAHGNKKISAHISLLEENLLLPEKGNVLLRNVACTLDDAQFVLNRVLYRDMKGISFTVVDEGKPIHVPQVQYHGNIFFWNQSRNKHDYNGSFLALPLQDAYMRIFGVLAVDTLRDPHEINIFLPHEIRFYQGVANVFSTAYHYVHSREHILHIVITGIGWLYDVTSSITSITTYFVEPSPAQDSDYVLRNMMVTGQLGLTEIHKNPPTIHRKSCIFRDFLFKCTDSSEVVLASACGETHIVVPLRERTGEALGVLDFNIGQNRMLLCQEYKDLQKMMKVVQVACYEILGEFSGEIKKKYILEIENVREVQRAGILFFRIMLLELQESIQLLNSMEFVSLLLYDHTLVTEPNSPQDSKSMELEANVKLVRDILKAVILFFHPELEFSSDFGSWDKCKFYVNKYLVNNICAFDPTAKHVEVNVQLIDEYIRDHSRTEVWKFGNVVIEHLYHWIHICSALMKITKQLNSGITPPLPSKTDNYMYAKMPGEGLQEK</sequence>
<name>EFCB5_HUMAN</name>
<comment type="alternative products">
    <event type="alternative splicing"/>
    <isoform>
        <id>A4FU69-1</id>
        <name>1</name>
        <sequence type="displayed"/>
    </isoform>
    <isoform>
        <id>A4FU69-2</id>
        <name>2</name>
        <sequence type="described" ref="VSP_030734 VSP_030735"/>
    </isoform>
    <isoform>
        <id>A4FU69-3</id>
        <name>3</name>
        <sequence type="described" ref="VSP_030732"/>
    </isoform>
    <isoform>
        <id>A4FU69-4</id>
        <name>4</name>
        <sequence type="described" ref="VSP_030733"/>
    </isoform>
    <isoform>
        <id>A4FU69-5</id>
        <name>5</name>
        <sequence type="described" ref="VSP_047184 VSP_047185 VSP_047186"/>
    </isoform>
    <isoform>
        <id>A4FU69-6</id>
        <name>6</name>
        <sequence type="described" ref="VSP_055510 VSP_047185 VSP_047186"/>
    </isoform>
</comment>
<comment type="sequence caution" evidence="9">
    <conflict type="erroneous initiation">
        <sequence resource="EMBL-CDS" id="BAC87284"/>
    </conflict>
    <text>Truncated N-terminus.</text>
</comment>
<keyword id="KW-0025">Alternative splicing</keyword>
<keyword id="KW-0106">Calcium</keyword>
<keyword id="KW-0479">Metal-binding</keyword>
<keyword id="KW-0597">Phosphoprotein</keyword>
<keyword id="KW-1267">Proteomics identification</keyword>
<keyword id="KW-1185">Reference proteome</keyword>